<feature type="chain" id="PRO_0000082663" description="Ras-like protein rasG">
    <location>
        <begin position="1"/>
        <end position="186"/>
    </location>
</feature>
<feature type="propeptide" id="PRO_0000281311" description="Removed in mature form" evidence="1">
    <location>
        <begin position="187"/>
        <end position="189"/>
    </location>
</feature>
<feature type="region of interest" description="Disordered" evidence="2">
    <location>
        <begin position="169"/>
        <end position="189"/>
    </location>
</feature>
<feature type="short sequence motif" description="Effector region">
    <location>
        <begin position="32"/>
        <end position="40"/>
    </location>
</feature>
<feature type="binding site" evidence="1">
    <location>
        <begin position="10"/>
        <end position="17"/>
    </location>
    <ligand>
        <name>GTP</name>
        <dbReference type="ChEBI" id="CHEBI:37565"/>
    </ligand>
</feature>
<feature type="binding site" evidence="1">
    <location>
        <begin position="57"/>
        <end position="61"/>
    </location>
    <ligand>
        <name>GTP</name>
        <dbReference type="ChEBI" id="CHEBI:37565"/>
    </ligand>
</feature>
<feature type="binding site" evidence="1">
    <location>
        <begin position="116"/>
        <end position="119"/>
    </location>
    <ligand>
        <name>GTP</name>
        <dbReference type="ChEBI" id="CHEBI:37565"/>
    </ligand>
</feature>
<feature type="modified residue" description="Cysteine methyl ester" evidence="1">
    <location>
        <position position="186"/>
    </location>
</feature>
<feature type="lipid moiety-binding region" description="S-geranylgeranyl cysteine" evidence="1">
    <location>
        <position position="186"/>
    </location>
</feature>
<feature type="mutagenesis site" description="Constitutively active." evidence="4">
    <original>Q</original>
    <variation>L</variation>
    <location>
        <position position="61"/>
    </location>
</feature>
<organism>
    <name type="scientific">Dictyostelium discoideum</name>
    <name type="common">Social amoeba</name>
    <dbReference type="NCBI Taxonomy" id="44689"/>
    <lineage>
        <taxon>Eukaryota</taxon>
        <taxon>Amoebozoa</taxon>
        <taxon>Evosea</taxon>
        <taxon>Eumycetozoa</taxon>
        <taxon>Dictyostelia</taxon>
        <taxon>Dictyosteliales</taxon>
        <taxon>Dictyosteliaceae</taxon>
        <taxon>Dictyostelium</taxon>
    </lineage>
</organism>
<reference key="1">
    <citation type="journal article" date="1989" name="Proc. Natl. Acad. Sci. U.S.A.">
        <title>Growing and developing Dictyostelium cells express different ras genes.</title>
        <authorList>
            <person name="Robbins S.M."/>
            <person name="Williams J.G."/>
            <person name="Jermyn K.A."/>
            <person name="Spiegelman G.B."/>
            <person name="Weeks G."/>
        </authorList>
    </citation>
    <scope>NUCLEOTIDE SEQUENCE [MRNA]</scope>
</reference>
<reference key="2">
    <citation type="journal article" date="1992" name="Biochim. Biophys. Acta">
        <title>Cloning and characterization of the Dictyostelium discoideum rasG genomic sequences.</title>
        <authorList>
            <person name="Robbins S.M."/>
            <person name="Williams J.G."/>
            <person name="Spiegelman G.B."/>
            <person name="Weeks G."/>
        </authorList>
    </citation>
    <scope>NUCLEOTIDE SEQUENCE [GENOMIC DNA]</scope>
    <source>
        <strain>AX2</strain>
    </source>
</reference>
<reference key="3">
    <citation type="journal article" date="2005" name="Nature">
        <title>The genome of the social amoeba Dictyostelium discoideum.</title>
        <authorList>
            <person name="Eichinger L."/>
            <person name="Pachebat J.A."/>
            <person name="Gloeckner G."/>
            <person name="Rajandream M.A."/>
            <person name="Sucgang R."/>
            <person name="Berriman M."/>
            <person name="Song J."/>
            <person name="Olsen R."/>
            <person name="Szafranski K."/>
            <person name="Xu Q."/>
            <person name="Tunggal B."/>
            <person name="Kummerfeld S."/>
            <person name="Madera M."/>
            <person name="Konfortov B.A."/>
            <person name="Rivero F."/>
            <person name="Bankier A.T."/>
            <person name="Lehmann R."/>
            <person name="Hamlin N."/>
            <person name="Davies R."/>
            <person name="Gaudet P."/>
            <person name="Fey P."/>
            <person name="Pilcher K."/>
            <person name="Chen G."/>
            <person name="Saunders D."/>
            <person name="Sodergren E.J."/>
            <person name="Davis P."/>
            <person name="Kerhornou A."/>
            <person name="Nie X."/>
            <person name="Hall N."/>
            <person name="Anjard C."/>
            <person name="Hemphill L."/>
            <person name="Bason N."/>
            <person name="Farbrother P."/>
            <person name="Desany B."/>
            <person name="Just E."/>
            <person name="Morio T."/>
            <person name="Rost R."/>
            <person name="Churcher C.M."/>
            <person name="Cooper J."/>
            <person name="Haydock S."/>
            <person name="van Driessche N."/>
            <person name="Cronin A."/>
            <person name="Goodhead I."/>
            <person name="Muzny D.M."/>
            <person name="Mourier T."/>
            <person name="Pain A."/>
            <person name="Lu M."/>
            <person name="Harper D."/>
            <person name="Lindsay R."/>
            <person name="Hauser H."/>
            <person name="James K.D."/>
            <person name="Quiles M."/>
            <person name="Madan Babu M."/>
            <person name="Saito T."/>
            <person name="Buchrieser C."/>
            <person name="Wardroper A."/>
            <person name="Felder M."/>
            <person name="Thangavelu M."/>
            <person name="Johnson D."/>
            <person name="Knights A."/>
            <person name="Loulseged H."/>
            <person name="Mungall K.L."/>
            <person name="Oliver K."/>
            <person name="Price C."/>
            <person name="Quail M.A."/>
            <person name="Urushihara H."/>
            <person name="Hernandez J."/>
            <person name="Rabbinowitsch E."/>
            <person name="Steffen D."/>
            <person name="Sanders M."/>
            <person name="Ma J."/>
            <person name="Kohara Y."/>
            <person name="Sharp S."/>
            <person name="Simmonds M.N."/>
            <person name="Spiegler S."/>
            <person name="Tivey A."/>
            <person name="Sugano S."/>
            <person name="White B."/>
            <person name="Walker D."/>
            <person name="Woodward J.R."/>
            <person name="Winckler T."/>
            <person name="Tanaka Y."/>
            <person name="Shaulsky G."/>
            <person name="Schleicher M."/>
            <person name="Weinstock G.M."/>
            <person name="Rosenthal A."/>
            <person name="Cox E.C."/>
            <person name="Chisholm R.L."/>
            <person name="Gibbs R.A."/>
            <person name="Loomis W.F."/>
            <person name="Platzer M."/>
            <person name="Kay R.R."/>
            <person name="Williams J.G."/>
            <person name="Dear P.H."/>
            <person name="Noegel A.A."/>
            <person name="Barrell B.G."/>
            <person name="Kuspa A."/>
        </authorList>
    </citation>
    <scope>NUCLEOTIDE SEQUENCE [LARGE SCALE GENOMIC DNA]</scope>
    <source>
        <strain>AX4</strain>
    </source>
</reference>
<reference key="4">
    <citation type="journal article" date="1999" name="Mol. Biol. Cell">
        <title>A novel Ras-interacting protein required for chemotaxis and cyclic adenosine monophosphate signal relay in Dictyostelium.</title>
        <authorList>
            <person name="Lee S."/>
            <person name="Parent C.A."/>
            <person name="Insall R."/>
            <person name="Firtel R.A."/>
        </authorList>
    </citation>
    <scope>INTERACTION WITH RIPA</scope>
</reference>
<reference key="5">
    <citation type="journal article" date="2006" name="Mol. Cell. Proteomics">
        <title>Proteomics fingerprinting of phagosome maturation and evidence for the role of a Galpha during uptake.</title>
        <authorList>
            <person name="Gotthardt D."/>
            <person name="Blancheteau V."/>
            <person name="Bosserhoff A."/>
            <person name="Ruppert T."/>
            <person name="Delorenzi M."/>
            <person name="Soldati T."/>
        </authorList>
    </citation>
    <scope>IDENTIFICATION BY MASS SPECTROMETRY [LARGE SCALE ANALYSIS]</scope>
    <source>
        <strain>AX2</strain>
    </source>
</reference>
<reference key="6">
    <citation type="journal article" date="2008" name="Curr. Biol.">
        <title>Spatiotemporal regulation of Ras activity provides directional sensing.</title>
        <authorList>
            <person name="Zhang S."/>
            <person name="Charest P.G."/>
            <person name="Firtel R.A."/>
        </authorList>
    </citation>
    <scope>FUNCTION</scope>
    <scope>CATALYTIC ACTIVITY</scope>
    <scope>MUTAGENESIS OF GLN-61</scope>
</reference>
<keyword id="KW-1003">Cell membrane</keyword>
<keyword id="KW-0342">GTP-binding</keyword>
<keyword id="KW-0378">Hydrolase</keyword>
<keyword id="KW-0449">Lipoprotein</keyword>
<keyword id="KW-0472">Membrane</keyword>
<keyword id="KW-0488">Methylation</keyword>
<keyword id="KW-0547">Nucleotide-binding</keyword>
<keyword id="KW-0636">Prenylation</keyword>
<keyword id="KW-1185">Reference proteome</keyword>
<name>RASG_DICDI</name>
<proteinExistence type="evidence at protein level"/>
<protein>
    <recommendedName>
        <fullName>Ras-like protein rasG</fullName>
        <ecNumber evidence="6">3.6.5.2</ecNumber>
    </recommendedName>
</protein>
<dbReference type="EC" id="3.6.5.2" evidence="6"/>
<dbReference type="EMBL" id="J04160">
    <property type="protein sequence ID" value="AAA33244.1"/>
    <property type="molecule type" value="mRNA"/>
</dbReference>
<dbReference type="EMBL" id="Z11533">
    <property type="protein sequence ID" value="CAA77632.1"/>
    <property type="molecule type" value="Genomic_DNA"/>
</dbReference>
<dbReference type="EMBL" id="AAFI02000210">
    <property type="protein sequence ID" value="EAL60719.1"/>
    <property type="molecule type" value="Genomic_DNA"/>
</dbReference>
<dbReference type="PIR" id="A31456">
    <property type="entry name" value="TVDORA"/>
</dbReference>
<dbReference type="RefSeq" id="XP_629133.1">
    <property type="nucleotide sequence ID" value="XM_629131.1"/>
</dbReference>
<dbReference type="SMR" id="P15064"/>
<dbReference type="FunCoup" id="P15064">
    <property type="interactions" value="221"/>
</dbReference>
<dbReference type="IntAct" id="P15064">
    <property type="interactions" value="1"/>
</dbReference>
<dbReference type="STRING" id="44689.P15064"/>
<dbReference type="PaxDb" id="44689-DDB0201663"/>
<dbReference type="EnsemblProtists" id="EAL60719">
    <property type="protein sequence ID" value="EAL60719"/>
    <property type="gene ID" value="DDB_G0293434"/>
</dbReference>
<dbReference type="GeneID" id="8629223"/>
<dbReference type="KEGG" id="ddi:DDB_G0293434"/>
<dbReference type="dictyBase" id="DDB_G0293434">
    <property type="gene designation" value="rasG"/>
</dbReference>
<dbReference type="VEuPathDB" id="AmoebaDB:DDB_G0293434"/>
<dbReference type="eggNOG" id="KOG0395">
    <property type="taxonomic scope" value="Eukaryota"/>
</dbReference>
<dbReference type="HOGENOM" id="CLU_041217_9_8_1"/>
<dbReference type="InParanoid" id="P15064"/>
<dbReference type="OMA" id="QCVIDDI"/>
<dbReference type="PhylomeDB" id="P15064"/>
<dbReference type="PRO" id="PR:P15064"/>
<dbReference type="Proteomes" id="UP000002195">
    <property type="component" value="Chromosome 6"/>
</dbReference>
<dbReference type="GO" id="GO:0005938">
    <property type="term" value="C:cell cortex"/>
    <property type="evidence" value="ECO:0000314"/>
    <property type="project" value="dictyBase"/>
</dbReference>
<dbReference type="GO" id="GO:0031252">
    <property type="term" value="C:cell leading edge"/>
    <property type="evidence" value="ECO:0000314"/>
    <property type="project" value="dictyBase"/>
</dbReference>
<dbReference type="GO" id="GO:0009898">
    <property type="term" value="C:cytoplasmic side of plasma membrane"/>
    <property type="evidence" value="ECO:0000314"/>
    <property type="project" value="dictyBase"/>
</dbReference>
<dbReference type="GO" id="GO:0005811">
    <property type="term" value="C:lipid droplet"/>
    <property type="evidence" value="ECO:0007005"/>
    <property type="project" value="dictyBase"/>
</dbReference>
<dbReference type="GO" id="GO:0044354">
    <property type="term" value="C:macropinosome"/>
    <property type="evidence" value="ECO:0000314"/>
    <property type="project" value="dictyBase"/>
</dbReference>
<dbReference type="GO" id="GO:0140220">
    <property type="term" value="C:pathogen-containing vacuole"/>
    <property type="evidence" value="ECO:0007005"/>
    <property type="project" value="dictyBase"/>
</dbReference>
<dbReference type="GO" id="GO:0001891">
    <property type="term" value="C:phagocytic cup"/>
    <property type="evidence" value="ECO:0000314"/>
    <property type="project" value="dictyBase"/>
</dbReference>
<dbReference type="GO" id="GO:0045335">
    <property type="term" value="C:phagocytic vesicle"/>
    <property type="evidence" value="ECO:0007005"/>
    <property type="project" value="dictyBase"/>
</dbReference>
<dbReference type="GO" id="GO:0005886">
    <property type="term" value="C:plasma membrane"/>
    <property type="evidence" value="ECO:0000314"/>
    <property type="project" value="dictyBase"/>
</dbReference>
<dbReference type="GO" id="GO:0031982">
    <property type="term" value="C:vesicle"/>
    <property type="evidence" value="ECO:0000314"/>
    <property type="project" value="dictyBase"/>
</dbReference>
<dbReference type="GO" id="GO:0010856">
    <property type="term" value="F:adenylate cyclase activator activity"/>
    <property type="evidence" value="ECO:0000316"/>
    <property type="project" value="dictyBase"/>
</dbReference>
<dbReference type="GO" id="GO:0003925">
    <property type="term" value="F:G protein activity"/>
    <property type="evidence" value="ECO:0000314"/>
    <property type="project" value="dictyBase"/>
</dbReference>
<dbReference type="GO" id="GO:0019003">
    <property type="term" value="F:GDP binding"/>
    <property type="evidence" value="ECO:0000318"/>
    <property type="project" value="GO_Central"/>
</dbReference>
<dbReference type="GO" id="GO:0005525">
    <property type="term" value="F:GTP binding"/>
    <property type="evidence" value="ECO:0000314"/>
    <property type="project" value="dictyBase"/>
</dbReference>
<dbReference type="GO" id="GO:0003924">
    <property type="term" value="F:GTPase activity"/>
    <property type="evidence" value="ECO:0000318"/>
    <property type="project" value="GO_Central"/>
</dbReference>
<dbReference type="GO" id="GO:0030250">
    <property type="term" value="F:guanylate cyclase activator activity"/>
    <property type="evidence" value="ECO:0000315"/>
    <property type="project" value="dictyBase"/>
</dbReference>
<dbReference type="GO" id="GO:0019900">
    <property type="term" value="F:kinase binding"/>
    <property type="evidence" value="ECO:0000353"/>
    <property type="project" value="dictyBase"/>
</dbReference>
<dbReference type="GO" id="GO:0043548">
    <property type="term" value="F:phosphatidylinositol 3-kinase binding"/>
    <property type="evidence" value="ECO:0000353"/>
    <property type="project" value="dictyBase"/>
</dbReference>
<dbReference type="GO" id="GO:0035014">
    <property type="term" value="F:phosphatidylinositol 3-kinase regulator activity"/>
    <property type="evidence" value="ECO:0000315"/>
    <property type="project" value="dictyBase"/>
</dbReference>
<dbReference type="GO" id="GO:0019887">
    <property type="term" value="F:protein kinase regulator activity"/>
    <property type="evidence" value="ECO:0000314"/>
    <property type="project" value="dictyBase"/>
</dbReference>
<dbReference type="GO" id="GO:0043130">
    <property type="term" value="F:ubiquitin binding"/>
    <property type="evidence" value="ECO:0000314"/>
    <property type="project" value="dictyBase"/>
</dbReference>
<dbReference type="GO" id="GO:0007015">
    <property type="term" value="P:actin filament organization"/>
    <property type="evidence" value="ECO:0000315"/>
    <property type="project" value="dictyBase"/>
</dbReference>
<dbReference type="GO" id="GO:0007188">
    <property type="term" value="P:adenylate cyclase-modulating G protein-coupled receptor signaling pathway"/>
    <property type="evidence" value="ECO:0000315"/>
    <property type="project" value="dictyBase"/>
</dbReference>
<dbReference type="GO" id="GO:0031152">
    <property type="term" value="P:aggregation involved in sorocarp development"/>
    <property type="evidence" value="ECO:0000315"/>
    <property type="project" value="dictyBase"/>
</dbReference>
<dbReference type="GO" id="GO:0019954">
    <property type="term" value="P:asexual reproduction"/>
    <property type="evidence" value="ECO:0000315"/>
    <property type="project" value="dictyBase"/>
</dbReference>
<dbReference type="GO" id="GO:0000902">
    <property type="term" value="P:cell morphogenesis"/>
    <property type="evidence" value="ECO:0000315"/>
    <property type="project" value="dictyBase"/>
</dbReference>
<dbReference type="GO" id="GO:0031589">
    <property type="term" value="P:cell-substrate adhesion"/>
    <property type="evidence" value="ECO:0000315"/>
    <property type="project" value="dictyBase"/>
</dbReference>
<dbReference type="GO" id="GO:0071321">
    <property type="term" value="P:cellular response to cGMP"/>
    <property type="evidence" value="ECO:0000316"/>
    <property type="project" value="dictyBase"/>
</dbReference>
<dbReference type="GO" id="GO:0043327">
    <property type="term" value="P:chemotaxis to cAMP"/>
    <property type="evidence" value="ECO:0000315"/>
    <property type="project" value="dictyBase"/>
</dbReference>
<dbReference type="GO" id="GO:0043326">
    <property type="term" value="P:chemotaxis to folate"/>
    <property type="evidence" value="ECO:0000315"/>
    <property type="project" value="dictyBase"/>
</dbReference>
<dbReference type="GO" id="GO:0046847">
    <property type="term" value="P:filopodium assembly"/>
    <property type="evidence" value="ECO:0000315"/>
    <property type="project" value="dictyBase"/>
</dbReference>
<dbReference type="GO" id="GO:0140986">
    <property type="term" value="P:G protein-coupled chemorepellent receptor signaling pathway"/>
    <property type="evidence" value="ECO:0000315"/>
    <property type="project" value="dictyBase"/>
</dbReference>
<dbReference type="GO" id="GO:0044351">
    <property type="term" value="P:macropinocytosis"/>
    <property type="evidence" value="ECO:0000315"/>
    <property type="project" value="dictyBase"/>
</dbReference>
<dbReference type="GO" id="GO:0000281">
    <property type="term" value="P:mitotic cytokinesis"/>
    <property type="evidence" value="ECO:0000315"/>
    <property type="project" value="dictyBase"/>
</dbReference>
<dbReference type="GO" id="GO:0010629">
    <property type="term" value="P:negative regulation of gene expression"/>
    <property type="evidence" value="ECO:0000315"/>
    <property type="project" value="dictyBase"/>
</dbReference>
<dbReference type="GO" id="GO:0051248">
    <property type="term" value="P:negative regulation of protein metabolic process"/>
    <property type="evidence" value="ECO:0000314"/>
    <property type="project" value="dictyBase"/>
</dbReference>
<dbReference type="GO" id="GO:1901262">
    <property type="term" value="P:negative regulation of sorocarp spore cell differentiation"/>
    <property type="evidence" value="ECO:0000315"/>
    <property type="project" value="dictyBase"/>
</dbReference>
<dbReference type="GO" id="GO:0006909">
    <property type="term" value="P:phagocytosis"/>
    <property type="evidence" value="ECO:0000315"/>
    <property type="project" value="dictyBase"/>
</dbReference>
<dbReference type="GO" id="GO:1903666">
    <property type="term" value="P:positive regulation of asexual reproduction"/>
    <property type="evidence" value="ECO:0000315"/>
    <property type="project" value="dictyBase"/>
</dbReference>
<dbReference type="GO" id="GO:0046587">
    <property type="term" value="P:positive regulation of calcium-dependent cell-cell adhesion"/>
    <property type="evidence" value="ECO:0000315"/>
    <property type="project" value="dictyBase"/>
</dbReference>
<dbReference type="GO" id="GO:0010811">
    <property type="term" value="P:positive regulation of cell-substrate adhesion"/>
    <property type="evidence" value="ECO:0000315"/>
    <property type="project" value="dictyBase"/>
</dbReference>
<dbReference type="GO" id="GO:0010753">
    <property type="term" value="P:positive regulation of cGMP-mediated signaling"/>
    <property type="evidence" value="ECO:0000315"/>
    <property type="project" value="dictyBase"/>
</dbReference>
<dbReference type="GO" id="GO:0051897">
    <property type="term" value="P:positive regulation of phosphatidylinositol 3-kinase/protein kinase B signal transduction"/>
    <property type="evidence" value="ECO:0000315"/>
    <property type="project" value="dictyBase"/>
</dbReference>
<dbReference type="GO" id="GO:0050927">
    <property type="term" value="P:positive regulation of positive chemotaxis"/>
    <property type="evidence" value="ECO:0000315"/>
    <property type="project" value="dictyBase"/>
</dbReference>
<dbReference type="GO" id="GO:0072697">
    <property type="term" value="P:protein localization to cell cortex"/>
    <property type="evidence" value="ECO:0000315"/>
    <property type="project" value="dictyBase"/>
</dbReference>
<dbReference type="GO" id="GO:1905301">
    <property type="term" value="P:regulation of macropinocytosis"/>
    <property type="evidence" value="ECO:0000316"/>
    <property type="project" value="dictyBase"/>
</dbReference>
<dbReference type="GO" id="GO:0032880">
    <property type="term" value="P:regulation of protein localization"/>
    <property type="evidence" value="ECO:0000315"/>
    <property type="project" value="dictyBase"/>
</dbReference>
<dbReference type="GO" id="GO:1905169">
    <property type="term" value="P:regulation of protein localization to phagocytic vesicle"/>
    <property type="evidence" value="ECO:0000315"/>
    <property type="project" value="dictyBase"/>
</dbReference>
<dbReference type="GO" id="GO:0051591">
    <property type="term" value="P:response to cAMP"/>
    <property type="evidence" value="ECO:0000314"/>
    <property type="project" value="dictyBase"/>
</dbReference>
<dbReference type="GO" id="GO:0051593">
    <property type="term" value="P:response to folic acid"/>
    <property type="evidence" value="ECO:0000316"/>
    <property type="project" value="dictyBase"/>
</dbReference>
<dbReference type="CDD" id="cd04138">
    <property type="entry name" value="H_N_K_Ras_like"/>
    <property type="match status" value="1"/>
</dbReference>
<dbReference type="FunFam" id="3.40.50.300:FF:000080">
    <property type="entry name" value="Ras-like GTPase Ras1"/>
    <property type="match status" value="1"/>
</dbReference>
<dbReference type="Gene3D" id="3.40.50.300">
    <property type="entry name" value="P-loop containing nucleotide triphosphate hydrolases"/>
    <property type="match status" value="1"/>
</dbReference>
<dbReference type="InterPro" id="IPR027417">
    <property type="entry name" value="P-loop_NTPase"/>
</dbReference>
<dbReference type="InterPro" id="IPR005225">
    <property type="entry name" value="Small_GTP-bd"/>
</dbReference>
<dbReference type="InterPro" id="IPR001806">
    <property type="entry name" value="Small_GTPase"/>
</dbReference>
<dbReference type="InterPro" id="IPR020849">
    <property type="entry name" value="Small_GTPase_Ras-type"/>
</dbReference>
<dbReference type="NCBIfam" id="TIGR00231">
    <property type="entry name" value="small_GTP"/>
    <property type="match status" value="1"/>
</dbReference>
<dbReference type="PANTHER" id="PTHR24070">
    <property type="entry name" value="RAS, DI-RAS, AND RHEB FAMILY MEMBERS OF SMALL GTPASE SUPERFAMILY"/>
    <property type="match status" value="1"/>
</dbReference>
<dbReference type="Pfam" id="PF00071">
    <property type="entry name" value="Ras"/>
    <property type="match status" value="1"/>
</dbReference>
<dbReference type="PRINTS" id="PR00449">
    <property type="entry name" value="RASTRNSFRMNG"/>
</dbReference>
<dbReference type="SMART" id="SM00175">
    <property type="entry name" value="RAB"/>
    <property type="match status" value="1"/>
</dbReference>
<dbReference type="SMART" id="SM00173">
    <property type="entry name" value="RAS"/>
    <property type="match status" value="1"/>
</dbReference>
<dbReference type="SMART" id="SM00174">
    <property type="entry name" value="RHO"/>
    <property type="match status" value="1"/>
</dbReference>
<dbReference type="SUPFAM" id="SSF52540">
    <property type="entry name" value="P-loop containing nucleoside triphosphate hydrolases"/>
    <property type="match status" value="1"/>
</dbReference>
<dbReference type="PROSITE" id="PS51421">
    <property type="entry name" value="RAS"/>
    <property type="match status" value="1"/>
</dbReference>
<evidence type="ECO:0000250" key="1"/>
<evidence type="ECO:0000256" key="2">
    <source>
        <dbReference type="SAM" id="MobiDB-lite"/>
    </source>
</evidence>
<evidence type="ECO:0000269" key="3">
    <source>
    </source>
</evidence>
<evidence type="ECO:0000269" key="4">
    <source>
    </source>
</evidence>
<evidence type="ECO:0000305" key="5"/>
<evidence type="ECO:0000305" key="6">
    <source>
    </source>
</evidence>
<sequence length="189" mass="21333">MTEYKLVIVGGGGVGKSALTIQLIQNHFIDEYDPTIEDSYRKQVTIDEETCLLDILDTAGQEEYSAMRDQYMRTGQGFLCVYSITSRSSFDEIASFREQILRVKDKDRVPMIVVGNKCDLESDRQVTTGEGQDLAKSFGSPFLETSAKIRVNVEEAFYSLVREIRKDLKGDSKPEKGKKKRPLKACTLL</sequence>
<accession>P15064</accession>
<accession>Q54BT6</accession>
<gene>
    <name type="primary">rasG</name>
    <name type="ORF">DDB_G0293434</name>
</gene>
<comment type="function">
    <text evidence="4">Ras proteins bind GDP/GTP and possess intrinsic GTPase activity.</text>
</comment>
<comment type="catalytic activity">
    <reaction evidence="6">
        <text>GTP + H2O = GDP + phosphate + H(+)</text>
        <dbReference type="Rhea" id="RHEA:19669"/>
        <dbReference type="ChEBI" id="CHEBI:15377"/>
        <dbReference type="ChEBI" id="CHEBI:15378"/>
        <dbReference type="ChEBI" id="CHEBI:37565"/>
        <dbReference type="ChEBI" id="CHEBI:43474"/>
        <dbReference type="ChEBI" id="CHEBI:58189"/>
        <dbReference type="EC" id="3.6.5.2"/>
    </reaction>
</comment>
<comment type="activity regulation">
    <text>Alternates between an inactive form bound to GDP and an active form bound to GTP. Activated by a guanine nucleotide-exchange factor (GEF) and inactivated by a GTPase-activating protein (GAP).</text>
</comment>
<comment type="subunit">
    <text evidence="3">Interacts with ripA.</text>
</comment>
<comment type="subcellular location">
    <subcellularLocation>
        <location evidence="5">Cell membrane</location>
        <topology evidence="5">Lipid-anchor</topology>
        <orientation evidence="5">Cytoplasmic side</orientation>
    </subcellularLocation>
</comment>
<comment type="similarity">
    <text evidence="5">Belongs to the small GTPase superfamily. Ras family.</text>
</comment>